<dbReference type="EC" id="7.1.1.2"/>
<dbReference type="EMBL" id="AY598549">
    <property type="protein sequence ID" value="AAU00495.1"/>
    <property type="molecule type" value="Genomic_DNA"/>
</dbReference>
<dbReference type="SMR" id="Q3L6T9"/>
<dbReference type="GO" id="GO:0005743">
    <property type="term" value="C:mitochondrial inner membrane"/>
    <property type="evidence" value="ECO:0000250"/>
    <property type="project" value="UniProtKB"/>
</dbReference>
<dbReference type="GO" id="GO:0045271">
    <property type="term" value="C:respiratory chain complex I"/>
    <property type="evidence" value="ECO:0000250"/>
    <property type="project" value="UniProtKB"/>
</dbReference>
<dbReference type="GO" id="GO:0008137">
    <property type="term" value="F:NADH dehydrogenase (ubiquinone) activity"/>
    <property type="evidence" value="ECO:0000250"/>
    <property type="project" value="UniProtKB"/>
</dbReference>
<dbReference type="GO" id="GO:0042773">
    <property type="term" value="P:ATP synthesis coupled electron transport"/>
    <property type="evidence" value="ECO:0007669"/>
    <property type="project" value="InterPro"/>
</dbReference>
<dbReference type="FunFam" id="1.10.287.3510:FF:000002">
    <property type="entry name" value="NADH-ubiquinone oxidoreductase chain 4L"/>
    <property type="match status" value="1"/>
</dbReference>
<dbReference type="Gene3D" id="1.10.287.3510">
    <property type="match status" value="1"/>
</dbReference>
<dbReference type="InterPro" id="IPR001133">
    <property type="entry name" value="NADH_UbQ_OxRdtase_chain4L/K"/>
</dbReference>
<dbReference type="InterPro" id="IPR039428">
    <property type="entry name" value="NUOK/Mnh_C1-like"/>
</dbReference>
<dbReference type="PANTHER" id="PTHR11434:SF0">
    <property type="entry name" value="NADH-UBIQUINONE OXIDOREDUCTASE CHAIN 4L"/>
    <property type="match status" value="1"/>
</dbReference>
<dbReference type="PANTHER" id="PTHR11434">
    <property type="entry name" value="NADH-UBIQUINONE OXIDOREDUCTASE SUBUNIT ND4L"/>
    <property type="match status" value="1"/>
</dbReference>
<dbReference type="Pfam" id="PF00420">
    <property type="entry name" value="Oxidored_q2"/>
    <property type="match status" value="1"/>
</dbReference>
<name>NU4LM_MARAM</name>
<organism>
    <name type="scientific">Martes americana</name>
    <name type="common">American marten</name>
    <name type="synonym">Mustela americanus</name>
    <dbReference type="NCBI Taxonomy" id="9660"/>
    <lineage>
        <taxon>Eukaryota</taxon>
        <taxon>Metazoa</taxon>
        <taxon>Chordata</taxon>
        <taxon>Craniata</taxon>
        <taxon>Vertebrata</taxon>
        <taxon>Euteleostomi</taxon>
        <taxon>Mammalia</taxon>
        <taxon>Eutheria</taxon>
        <taxon>Laurasiatheria</taxon>
        <taxon>Carnivora</taxon>
        <taxon>Caniformia</taxon>
        <taxon>Musteloidea</taxon>
        <taxon>Mustelidae</taxon>
        <taxon>Guloninae</taxon>
        <taxon>Martes</taxon>
    </lineage>
</organism>
<accession>Q3L6T9</accession>
<reference key="1">
    <citation type="journal article" date="2005" name="Mol. Phylogenet. Evol.">
        <title>A phylogeny of the Caniformia (order Carnivora) based on 12 complete protein-coding mitochondrial genes.</title>
        <authorList>
            <person name="Delisle I."/>
            <person name="Strobeck C."/>
        </authorList>
    </citation>
    <scope>NUCLEOTIDE SEQUENCE [GENOMIC DNA]</scope>
</reference>
<evidence type="ECO:0000250" key="1">
    <source>
        <dbReference type="UniProtKB" id="P03901"/>
    </source>
</evidence>
<evidence type="ECO:0000250" key="2">
    <source>
        <dbReference type="UniProtKB" id="P03902"/>
    </source>
</evidence>
<evidence type="ECO:0000255" key="3"/>
<evidence type="ECO:0000305" key="4"/>
<comment type="function">
    <text evidence="1">Core subunit of the mitochondrial membrane respiratory chain NADH dehydrogenase (Complex I) which catalyzes electron transfer from NADH through the respiratory chain, using ubiquinone as an electron acceptor. Part of the enzyme membrane arm which is embedded in the lipid bilayer and involved in proton translocation.</text>
</comment>
<comment type="catalytic activity">
    <reaction evidence="1">
        <text>a ubiquinone + NADH + 5 H(+)(in) = a ubiquinol + NAD(+) + 4 H(+)(out)</text>
        <dbReference type="Rhea" id="RHEA:29091"/>
        <dbReference type="Rhea" id="RHEA-COMP:9565"/>
        <dbReference type="Rhea" id="RHEA-COMP:9566"/>
        <dbReference type="ChEBI" id="CHEBI:15378"/>
        <dbReference type="ChEBI" id="CHEBI:16389"/>
        <dbReference type="ChEBI" id="CHEBI:17976"/>
        <dbReference type="ChEBI" id="CHEBI:57540"/>
        <dbReference type="ChEBI" id="CHEBI:57945"/>
        <dbReference type="EC" id="7.1.1.2"/>
    </reaction>
    <physiologicalReaction direction="left-to-right" evidence="1">
        <dbReference type="Rhea" id="RHEA:29092"/>
    </physiologicalReaction>
</comment>
<comment type="subunit">
    <text evidence="2">Core subunit of respiratory chain NADH dehydrogenase (Complex I) which is composed of 45 different subunits.</text>
</comment>
<comment type="subcellular location">
    <subcellularLocation>
        <location evidence="2">Mitochondrion inner membrane</location>
        <topology evidence="3">Multi-pass membrane protein</topology>
    </subcellularLocation>
</comment>
<comment type="similarity">
    <text evidence="4">Belongs to the complex I subunit 4L family.</text>
</comment>
<keyword id="KW-0249">Electron transport</keyword>
<keyword id="KW-0472">Membrane</keyword>
<keyword id="KW-0496">Mitochondrion</keyword>
<keyword id="KW-0999">Mitochondrion inner membrane</keyword>
<keyword id="KW-0520">NAD</keyword>
<keyword id="KW-0679">Respiratory chain</keyword>
<keyword id="KW-1278">Translocase</keyword>
<keyword id="KW-0812">Transmembrane</keyword>
<keyword id="KW-1133">Transmembrane helix</keyword>
<keyword id="KW-0813">Transport</keyword>
<keyword id="KW-0830">Ubiquinone</keyword>
<feature type="chain" id="PRO_0000275053" description="NADH-ubiquinone oxidoreductase chain 4L">
    <location>
        <begin position="1"/>
        <end position="98"/>
    </location>
</feature>
<feature type="transmembrane region" description="Helical" evidence="3">
    <location>
        <begin position="1"/>
        <end position="21"/>
    </location>
</feature>
<feature type="transmembrane region" description="Helical" evidence="3">
    <location>
        <begin position="30"/>
        <end position="50"/>
    </location>
</feature>
<feature type="transmembrane region" description="Helical" evidence="3">
    <location>
        <begin position="61"/>
        <end position="81"/>
    </location>
</feature>
<geneLocation type="mitochondrion"/>
<gene>
    <name type="primary">MT-ND4L</name>
    <name type="synonym">MTND4L</name>
    <name type="synonym">NADH4L</name>
    <name type="synonym">ND4L</name>
</gene>
<protein>
    <recommendedName>
        <fullName>NADH-ubiquinone oxidoreductase chain 4L</fullName>
        <ecNumber>7.1.1.2</ecNumber>
    </recommendedName>
    <alternativeName>
        <fullName>NADH dehydrogenase subunit 4L</fullName>
    </alternativeName>
</protein>
<proteinExistence type="inferred from homology"/>
<sequence length="98" mass="10905">MSMVYINIFLAFILSFMGLLIYRSHLMSSLLCLEGMMLSLFIMMTVTILTNHLTLASMTPIILLVFAACEAALGLSLLVMISNTYGTDYVQNLNLLQC</sequence>